<proteinExistence type="inferred from homology"/>
<protein>
    <recommendedName>
        <fullName evidence="1">Bacilliredoxin SAR1592</fullName>
    </recommendedName>
</protein>
<feature type="chain" id="PRO_0000272000" description="Bacilliredoxin SAR1592">
    <location>
        <begin position="1"/>
        <end position="145"/>
    </location>
</feature>
<reference key="1">
    <citation type="journal article" date="2004" name="Proc. Natl. Acad. Sci. U.S.A.">
        <title>Complete genomes of two clinical Staphylococcus aureus strains: evidence for the rapid evolution of virulence and drug resistance.</title>
        <authorList>
            <person name="Holden M.T.G."/>
            <person name="Feil E.J."/>
            <person name="Lindsay J.A."/>
            <person name="Peacock S.J."/>
            <person name="Day N.P.J."/>
            <person name="Enright M.C."/>
            <person name="Foster T.J."/>
            <person name="Moore C.E."/>
            <person name="Hurst L."/>
            <person name="Atkin R."/>
            <person name="Barron A."/>
            <person name="Bason N."/>
            <person name="Bentley S.D."/>
            <person name="Chillingworth C."/>
            <person name="Chillingworth T."/>
            <person name="Churcher C."/>
            <person name="Clark L."/>
            <person name="Corton C."/>
            <person name="Cronin A."/>
            <person name="Doggett J."/>
            <person name="Dowd L."/>
            <person name="Feltwell T."/>
            <person name="Hance Z."/>
            <person name="Harris B."/>
            <person name="Hauser H."/>
            <person name="Holroyd S."/>
            <person name="Jagels K."/>
            <person name="James K.D."/>
            <person name="Lennard N."/>
            <person name="Line A."/>
            <person name="Mayes R."/>
            <person name="Moule S."/>
            <person name="Mungall K."/>
            <person name="Ormond D."/>
            <person name="Quail M.A."/>
            <person name="Rabbinowitsch E."/>
            <person name="Rutherford K.M."/>
            <person name="Sanders M."/>
            <person name="Sharp S."/>
            <person name="Simmonds M."/>
            <person name="Stevens K."/>
            <person name="Whitehead S."/>
            <person name="Barrell B.G."/>
            <person name="Spratt B.G."/>
            <person name="Parkhill J."/>
        </authorList>
    </citation>
    <scope>NUCLEOTIDE SEQUENCE [LARGE SCALE GENOMIC DNA]</scope>
    <source>
        <strain>MRSA252</strain>
    </source>
</reference>
<name>Y1592_STAAR</name>
<sequence length="145" mass="16207">MDMNFDLYMNGVVEQARNEIESAGYEQLTTAEDVDKVLKQDGTTLVMINSVCGCAGGIARPAASHALHYDVLPDRLVTVFAGQDKEATQRAREYFEGYAPSSPSFALVKDGNITEMIERHQIEGHDVMNVINQLQTLFNKYCEER</sequence>
<organism>
    <name type="scientific">Staphylococcus aureus (strain MRSA252)</name>
    <dbReference type="NCBI Taxonomy" id="282458"/>
    <lineage>
        <taxon>Bacteria</taxon>
        <taxon>Bacillati</taxon>
        <taxon>Bacillota</taxon>
        <taxon>Bacilli</taxon>
        <taxon>Bacillales</taxon>
        <taxon>Staphylococcaceae</taxon>
        <taxon>Staphylococcus</taxon>
    </lineage>
</organism>
<dbReference type="EMBL" id="BX571856">
    <property type="protein sequence ID" value="CAG40587.1"/>
    <property type="molecule type" value="Genomic_DNA"/>
</dbReference>
<dbReference type="SMR" id="Q6GGI4"/>
<dbReference type="KEGG" id="sar:SAR1592"/>
<dbReference type="HOGENOM" id="CLU_132521_0_0_9"/>
<dbReference type="Proteomes" id="UP000000596">
    <property type="component" value="Chromosome"/>
</dbReference>
<dbReference type="GO" id="GO:0045454">
    <property type="term" value="P:cell redox homeostasis"/>
    <property type="evidence" value="ECO:0000250"/>
    <property type="project" value="UniProtKB"/>
</dbReference>
<dbReference type="Gene3D" id="3.40.30.10">
    <property type="entry name" value="Glutaredoxin"/>
    <property type="match status" value="1"/>
</dbReference>
<dbReference type="InterPro" id="IPR009474">
    <property type="entry name" value="BrxB/BrxA"/>
</dbReference>
<dbReference type="NCBIfam" id="TIGR04191">
    <property type="entry name" value="YphP_YqiW"/>
    <property type="match status" value="1"/>
</dbReference>
<dbReference type="PANTHER" id="PTHR40052:SF1">
    <property type="entry name" value="BACILLIREDOXIN BRXB"/>
    <property type="match status" value="1"/>
</dbReference>
<dbReference type="PANTHER" id="PTHR40052">
    <property type="entry name" value="UPF0403 PROTEIN YQIW-RELATED"/>
    <property type="match status" value="1"/>
</dbReference>
<dbReference type="Pfam" id="PF06491">
    <property type="entry name" value="Disulph_isomer"/>
    <property type="match status" value="1"/>
</dbReference>
<gene>
    <name type="ordered locus">SAR1592</name>
</gene>
<comment type="similarity">
    <text evidence="1">Belongs to the bacilliredoxin family.</text>
</comment>
<accession>Q6GGI4</accession>
<evidence type="ECO:0000305" key="1"/>